<protein>
    <recommendedName>
        <fullName evidence="5">Protein LURE 1.5</fullName>
        <shortName evidence="5">AtLURE1.5</shortName>
    </recommendedName>
    <alternativeName>
        <fullName evidence="5">Cysteine-Rich Peptide 810_1.5</fullName>
        <shortName evidence="5">CRP810_1.5</shortName>
    </alternativeName>
    <alternativeName>
        <fullName evidence="4">Defensin-like protein 212</fullName>
    </alternativeName>
</protein>
<comment type="function">
    <text evidence="3">Inactive pollen tube attractants guiding pollen tubes to the ovular micropyle.</text>
</comment>
<comment type="subcellular location">
    <subcellularLocation>
        <location evidence="3">Secreted</location>
    </subcellularLocation>
    <text evidence="3">found at the micropylar end of the female gametophyte, possibly at the filiform apparatus of the synergid cell. Difuses to the surface of the funiculus of the ovule through the micropyle.</text>
</comment>
<comment type="tissue specificity">
    <text evidence="3">Expressed in the pistil. Detected exclusively in the synergid cells.</text>
</comment>
<comment type="similarity">
    <text evidence="6">Belongs to the DEFL family.</text>
</comment>
<comment type="caution">
    <text evidence="6">Lacks 2 of the 4 disulfide bonds, which are conserved features of the family.</text>
</comment>
<keyword id="KW-1015">Disulfide bond</keyword>
<keyword id="KW-1185">Reference proteome</keyword>
<keyword id="KW-0964">Secreted</keyword>
<keyword id="KW-0732">Signal</keyword>
<feature type="signal peptide" evidence="2">
    <location>
        <begin position="1"/>
        <end position="19"/>
    </location>
</feature>
<feature type="chain" id="PRO_0000379704" description="Protein LURE 1.5">
    <location>
        <begin position="20"/>
        <end position="90"/>
    </location>
</feature>
<feature type="disulfide bond" evidence="1">
    <location>
        <begin position="58"/>
        <end position="75"/>
    </location>
</feature>
<feature type="disulfide bond" evidence="1">
    <location>
        <begin position="61"/>
        <end position="82"/>
    </location>
</feature>
<feature type="mutagenesis site" description="Gain of pollen tube attraction activity." evidence="3">
    <original>Y</original>
    <variation>C</variation>
    <location>
        <position position="84"/>
    </location>
</feature>
<dbReference type="EMBL" id="AB016875">
    <property type="status" value="NOT_ANNOTATED_CDS"/>
    <property type="molecule type" value="Genomic_DNA"/>
</dbReference>
<dbReference type="EMBL" id="CP002688">
    <property type="protein sequence ID" value="AED94977.1"/>
    <property type="molecule type" value="Genomic_DNA"/>
</dbReference>
<dbReference type="RefSeq" id="NP_001032005.1">
    <property type="nucleotide sequence ID" value="NM_001036928.2"/>
</dbReference>
<dbReference type="SMR" id="A8MRC6"/>
<dbReference type="STRING" id="3702.A8MRC6"/>
<dbReference type="PaxDb" id="3702-AT5G43525.1"/>
<dbReference type="ProteomicsDB" id="238682"/>
<dbReference type="EnsemblPlants" id="AT5G43525.1">
    <property type="protein sequence ID" value="AT5G43525.1"/>
    <property type="gene ID" value="AT5G43525"/>
</dbReference>
<dbReference type="GeneID" id="3771420"/>
<dbReference type="Gramene" id="AT5G43525.1">
    <property type="protein sequence ID" value="AT5G43525.1"/>
    <property type="gene ID" value="AT5G43525"/>
</dbReference>
<dbReference type="KEGG" id="ath:AT5G43525"/>
<dbReference type="Araport" id="AT5G43525"/>
<dbReference type="TAIR" id="AT5G43525">
    <property type="gene designation" value="LURE1.5"/>
</dbReference>
<dbReference type="HOGENOM" id="CLU_180309_0_0_1"/>
<dbReference type="InParanoid" id="A8MRC6"/>
<dbReference type="PhylomeDB" id="A8MRC6"/>
<dbReference type="PRO" id="PR:A8MRC6"/>
<dbReference type="Proteomes" id="UP000006548">
    <property type="component" value="Chromosome 5"/>
</dbReference>
<dbReference type="ExpressionAtlas" id="A8MRC6">
    <property type="expression patterns" value="baseline"/>
</dbReference>
<dbReference type="GO" id="GO:0005576">
    <property type="term" value="C:extracellular region"/>
    <property type="evidence" value="ECO:0007669"/>
    <property type="project" value="UniProtKB-SubCell"/>
</dbReference>
<dbReference type="CDD" id="cd21804">
    <property type="entry name" value="DEFL_AtLURE1-like"/>
    <property type="match status" value="1"/>
</dbReference>
<dbReference type="InterPro" id="IPR047497">
    <property type="entry name" value="DEFL_AtLURE1-like"/>
</dbReference>
<name>LUR15_ARATH</name>
<evidence type="ECO:0000250" key="1">
    <source>
        <dbReference type="UniProtKB" id="Q09198"/>
    </source>
</evidence>
<evidence type="ECO:0000255" key="2"/>
<evidence type="ECO:0000269" key="3">
    <source>
    </source>
</evidence>
<evidence type="ECO:0000303" key="4">
    <source>
    </source>
</evidence>
<evidence type="ECO:0000303" key="5">
    <source>
    </source>
</evidence>
<evidence type="ECO:0000305" key="6"/>
<evidence type="ECO:0000312" key="7">
    <source>
        <dbReference type="EMBL" id="AB016875"/>
    </source>
</evidence>
<organism>
    <name type="scientific">Arabidopsis thaliana</name>
    <name type="common">Mouse-ear cress</name>
    <dbReference type="NCBI Taxonomy" id="3702"/>
    <lineage>
        <taxon>Eukaryota</taxon>
        <taxon>Viridiplantae</taxon>
        <taxon>Streptophyta</taxon>
        <taxon>Embryophyta</taxon>
        <taxon>Tracheophyta</taxon>
        <taxon>Spermatophyta</taxon>
        <taxon>Magnoliopsida</taxon>
        <taxon>eudicotyledons</taxon>
        <taxon>Gunneridae</taxon>
        <taxon>Pentapetalae</taxon>
        <taxon>rosids</taxon>
        <taxon>malvids</taxon>
        <taxon>Brassicales</taxon>
        <taxon>Brassicaceae</taxon>
        <taxon>Camelineae</taxon>
        <taxon>Arabidopsis</taxon>
    </lineage>
</organism>
<accession>A8MRC6</accession>
<proteinExistence type="evidence at protein level"/>
<sequence length="90" mass="10372">MKLPIIFLTLLIFVSSCTSVLINGSSDEERTYSFSPRASPFDPRSLNQELKIGRIGYCFDCARACMRRGKYIRTCSFERKLCRYSISDIK</sequence>
<reference key="1">
    <citation type="journal article" date="1998" name="DNA Res.">
        <title>Structural analysis of Arabidopsis thaliana chromosome 5. VIII. Sequence features of the regions of 1,081,958 bp covered by seventeen physically assigned P1 and TAC clones.</title>
        <authorList>
            <person name="Asamizu E."/>
            <person name="Sato S."/>
            <person name="Kaneko T."/>
            <person name="Nakamura Y."/>
            <person name="Kotani H."/>
            <person name="Miyajima N."/>
            <person name="Tabata S."/>
        </authorList>
    </citation>
    <scope>NUCLEOTIDE SEQUENCE [LARGE SCALE GENOMIC DNA]</scope>
    <source>
        <strain>cv. Columbia</strain>
    </source>
</reference>
<reference key="2">
    <citation type="journal article" date="2017" name="Plant J.">
        <title>Araport11: a complete reannotation of the Arabidopsis thaliana reference genome.</title>
        <authorList>
            <person name="Cheng C.Y."/>
            <person name="Krishnakumar V."/>
            <person name="Chan A.P."/>
            <person name="Thibaud-Nissen F."/>
            <person name="Schobel S."/>
            <person name="Town C.D."/>
        </authorList>
    </citation>
    <scope>GENOME REANNOTATION</scope>
    <source>
        <strain>cv. Columbia</strain>
    </source>
</reference>
<reference key="3">
    <citation type="journal article" date="2005" name="Plant Physiol.">
        <title>Genome organization of more than 300 defensin-like genes in Arabidopsis.</title>
        <authorList>
            <person name="Silverstein K.A.T."/>
            <person name="Graham M.A."/>
            <person name="Paape T.D."/>
            <person name="VandenBosch K.A."/>
        </authorList>
    </citation>
    <scope>GENE FAMILY</scope>
</reference>
<reference key="4">
    <citation type="journal article" date="2012" name="PLoS Biol.">
        <title>A species-specific cluster of defensin-like genes encodes diffusible pollen tube attractants in Arabidopsis.</title>
        <authorList>
            <person name="Takeuchi H."/>
            <person name="Higashiyama T."/>
        </authorList>
    </citation>
    <scope>FUNCTION</scope>
    <scope>GENE FAMILY</scope>
    <scope>NOMENCLATURE</scope>
    <scope>TISSUE SPECIFICITY</scope>
    <scope>SUBCELLULAR LOCATION</scope>
    <scope>MUTAGENESIS OF TYR-84</scope>
</reference>
<gene>
    <name evidence="5" type="primary">LURE1.5</name>
    <name evidence="5" type="synonym">CRP810_1.5</name>
    <name type="ordered locus">At5g43525</name>
    <name evidence="7" type="ORF">K9D7</name>
</gene>